<feature type="chain" id="PRO_0000241638" description="Large ribosomal subunit protein uL24">
    <location>
        <begin position="1"/>
        <end position="118"/>
    </location>
</feature>
<comment type="function">
    <text evidence="1">One of two assembly initiator proteins, it binds directly to the 5'-end of the 23S rRNA, where it nucleates assembly of the 50S subunit.</text>
</comment>
<comment type="function">
    <text evidence="1">One of the proteins that surrounds the polypeptide exit tunnel on the outside of the subunit.</text>
</comment>
<comment type="subunit">
    <text evidence="1">Part of the 50S ribosomal subunit.</text>
</comment>
<comment type="similarity">
    <text evidence="1">Belongs to the universal ribosomal protein uL24 family.</text>
</comment>
<keyword id="KW-1185">Reference proteome</keyword>
<keyword id="KW-0687">Ribonucleoprotein</keyword>
<keyword id="KW-0689">Ribosomal protein</keyword>
<keyword id="KW-0694">RNA-binding</keyword>
<keyword id="KW-0699">rRNA-binding</keyword>
<gene>
    <name evidence="1" type="primary">rplX</name>
    <name evidence="1" type="synonym">rpl24</name>
    <name type="ordered locus">PMN2A_1118</name>
</gene>
<dbReference type="EMBL" id="CP000095">
    <property type="protein sequence ID" value="AAZ58608.1"/>
    <property type="molecule type" value="Genomic_DNA"/>
</dbReference>
<dbReference type="SMR" id="Q46IS0"/>
<dbReference type="STRING" id="59920.PMN2A_1118"/>
<dbReference type="KEGG" id="pmn:PMN2A_1118"/>
<dbReference type="HOGENOM" id="CLU_093315_2_3_3"/>
<dbReference type="OrthoDB" id="9807419at2"/>
<dbReference type="PhylomeDB" id="Q46IS0"/>
<dbReference type="Proteomes" id="UP000002535">
    <property type="component" value="Chromosome"/>
</dbReference>
<dbReference type="GO" id="GO:1990904">
    <property type="term" value="C:ribonucleoprotein complex"/>
    <property type="evidence" value="ECO:0007669"/>
    <property type="project" value="UniProtKB-KW"/>
</dbReference>
<dbReference type="GO" id="GO:0005840">
    <property type="term" value="C:ribosome"/>
    <property type="evidence" value="ECO:0007669"/>
    <property type="project" value="UniProtKB-KW"/>
</dbReference>
<dbReference type="GO" id="GO:0019843">
    <property type="term" value="F:rRNA binding"/>
    <property type="evidence" value="ECO:0007669"/>
    <property type="project" value="UniProtKB-UniRule"/>
</dbReference>
<dbReference type="GO" id="GO:0003735">
    <property type="term" value="F:structural constituent of ribosome"/>
    <property type="evidence" value="ECO:0007669"/>
    <property type="project" value="InterPro"/>
</dbReference>
<dbReference type="GO" id="GO:0006412">
    <property type="term" value="P:translation"/>
    <property type="evidence" value="ECO:0007669"/>
    <property type="project" value="UniProtKB-UniRule"/>
</dbReference>
<dbReference type="CDD" id="cd06089">
    <property type="entry name" value="KOW_RPL26"/>
    <property type="match status" value="1"/>
</dbReference>
<dbReference type="Gene3D" id="2.30.30.30">
    <property type="match status" value="1"/>
</dbReference>
<dbReference type="HAMAP" id="MF_01326_B">
    <property type="entry name" value="Ribosomal_uL24_B"/>
    <property type="match status" value="1"/>
</dbReference>
<dbReference type="InterPro" id="IPR005824">
    <property type="entry name" value="KOW"/>
</dbReference>
<dbReference type="InterPro" id="IPR014722">
    <property type="entry name" value="Rib_uL2_dom2"/>
</dbReference>
<dbReference type="InterPro" id="IPR003256">
    <property type="entry name" value="Ribosomal_uL24"/>
</dbReference>
<dbReference type="InterPro" id="IPR005825">
    <property type="entry name" value="Ribosomal_uL24_CS"/>
</dbReference>
<dbReference type="InterPro" id="IPR041988">
    <property type="entry name" value="Ribosomal_uL24_KOW"/>
</dbReference>
<dbReference type="InterPro" id="IPR008991">
    <property type="entry name" value="Translation_prot_SH3-like_sf"/>
</dbReference>
<dbReference type="NCBIfam" id="TIGR01079">
    <property type="entry name" value="rplX_bact"/>
    <property type="match status" value="1"/>
</dbReference>
<dbReference type="PANTHER" id="PTHR12903">
    <property type="entry name" value="MITOCHONDRIAL RIBOSOMAL PROTEIN L24"/>
    <property type="match status" value="1"/>
</dbReference>
<dbReference type="Pfam" id="PF00467">
    <property type="entry name" value="KOW"/>
    <property type="match status" value="1"/>
</dbReference>
<dbReference type="Pfam" id="PF17136">
    <property type="entry name" value="ribosomal_L24"/>
    <property type="match status" value="1"/>
</dbReference>
<dbReference type="SMART" id="SM00739">
    <property type="entry name" value="KOW"/>
    <property type="match status" value="1"/>
</dbReference>
<dbReference type="SUPFAM" id="SSF50104">
    <property type="entry name" value="Translation proteins SH3-like domain"/>
    <property type="match status" value="1"/>
</dbReference>
<dbReference type="PROSITE" id="PS01108">
    <property type="entry name" value="RIBOSOMAL_L24"/>
    <property type="match status" value="1"/>
</dbReference>
<organism>
    <name type="scientific">Prochlorococcus marinus (strain NATL2A)</name>
    <dbReference type="NCBI Taxonomy" id="59920"/>
    <lineage>
        <taxon>Bacteria</taxon>
        <taxon>Bacillati</taxon>
        <taxon>Cyanobacteriota</taxon>
        <taxon>Cyanophyceae</taxon>
        <taxon>Synechococcales</taxon>
        <taxon>Prochlorococcaceae</taxon>
        <taxon>Prochlorococcus</taxon>
    </lineage>
</organism>
<protein>
    <recommendedName>
        <fullName evidence="1">Large ribosomal subunit protein uL24</fullName>
    </recommendedName>
    <alternativeName>
        <fullName evidence="2">50S ribosomal protein L24</fullName>
    </alternativeName>
</protein>
<accession>Q46IS0</accession>
<name>RL24_PROMT</name>
<sequence>MPAINKTKGSADRIKMKIRKGDTVQVISGKDKGKTGEVLKTLPYENRVLVQGINQRTKHVKPSQEGETGRIETKEFSLHASNVMIYSTKEKVASKVEIFVDKDGSKKRRLKKTGELID</sequence>
<evidence type="ECO:0000255" key="1">
    <source>
        <dbReference type="HAMAP-Rule" id="MF_01326"/>
    </source>
</evidence>
<evidence type="ECO:0000305" key="2"/>
<reference key="1">
    <citation type="journal article" date="2007" name="PLoS Genet.">
        <title>Patterns and implications of gene gain and loss in the evolution of Prochlorococcus.</title>
        <authorList>
            <person name="Kettler G.C."/>
            <person name="Martiny A.C."/>
            <person name="Huang K."/>
            <person name="Zucker J."/>
            <person name="Coleman M.L."/>
            <person name="Rodrigue S."/>
            <person name="Chen F."/>
            <person name="Lapidus A."/>
            <person name="Ferriera S."/>
            <person name="Johnson J."/>
            <person name="Steglich C."/>
            <person name="Church G.M."/>
            <person name="Richardson P."/>
            <person name="Chisholm S.W."/>
        </authorList>
    </citation>
    <scope>NUCLEOTIDE SEQUENCE [LARGE SCALE GENOMIC DNA]</scope>
    <source>
        <strain>NATL2A</strain>
    </source>
</reference>
<proteinExistence type="inferred from homology"/>